<protein>
    <recommendedName>
        <fullName>Neurotrophin-3</fullName>
        <shortName>NT-3</shortName>
    </recommendedName>
</protein>
<evidence type="ECO:0000250" key="1"/>
<evidence type="ECO:0000255" key="2"/>
<evidence type="ECO:0000305" key="3"/>
<comment type="function">
    <text evidence="1">Seems to promote the survival of visceral and proprioceptive sensory neurons.</text>
</comment>
<comment type="subcellular location">
    <subcellularLocation>
        <location evidence="1">Secreted</location>
    </subcellularLocation>
</comment>
<comment type="similarity">
    <text evidence="3">Belongs to the NGF-beta family.</text>
</comment>
<keyword id="KW-0165">Cleavage on pair of basic residues</keyword>
<keyword id="KW-0325">Glycoprotein</keyword>
<keyword id="KW-0339">Growth factor</keyword>
<keyword id="KW-0964">Secreted</keyword>
<keyword id="KW-0732">Signal</keyword>
<name>NTF3_CALRI</name>
<feature type="signal peptide" evidence="2">
    <location>
        <begin position="1" status="less than"/>
        <end position="3"/>
    </location>
</feature>
<feature type="propeptide" id="PRO_0000346713" evidence="1">
    <location>
        <begin position="4"/>
        <end position="119"/>
    </location>
</feature>
<feature type="chain" id="PRO_0000346714" description="Neurotrophin-3">
    <location>
        <begin position="120"/>
        <end position="165" status="greater than"/>
    </location>
</feature>
<feature type="glycosylation site" description="N-linked (GlcNAc...) asparagine" evidence="2">
    <location>
        <position position="112"/>
    </location>
</feature>
<feature type="non-terminal residue">
    <location>
        <position position="1"/>
    </location>
</feature>
<feature type="non-terminal residue">
    <location>
        <position position="165"/>
    </location>
</feature>
<proteinExistence type="inferred from homology"/>
<accession>Q1X6Y0</accession>
<dbReference type="EMBL" id="AY988058">
    <property type="protein sequence ID" value="AAY44265.1"/>
    <property type="molecule type" value="Genomic_DNA"/>
</dbReference>
<dbReference type="SMR" id="Q1X6Y0"/>
<dbReference type="GlyCosmos" id="Q1X6Y0">
    <property type="glycosylation" value="1 site, No reported glycans"/>
</dbReference>
<dbReference type="GO" id="GO:0030424">
    <property type="term" value="C:axon"/>
    <property type="evidence" value="ECO:0007669"/>
    <property type="project" value="TreeGrafter"/>
</dbReference>
<dbReference type="GO" id="GO:0030425">
    <property type="term" value="C:dendrite"/>
    <property type="evidence" value="ECO:0007669"/>
    <property type="project" value="TreeGrafter"/>
</dbReference>
<dbReference type="GO" id="GO:0005615">
    <property type="term" value="C:extracellular space"/>
    <property type="evidence" value="ECO:0007669"/>
    <property type="project" value="TreeGrafter"/>
</dbReference>
<dbReference type="GO" id="GO:0008021">
    <property type="term" value="C:synaptic vesicle"/>
    <property type="evidence" value="ECO:0007669"/>
    <property type="project" value="TreeGrafter"/>
</dbReference>
<dbReference type="GO" id="GO:0008083">
    <property type="term" value="F:growth factor activity"/>
    <property type="evidence" value="ECO:0007669"/>
    <property type="project" value="UniProtKB-KW"/>
</dbReference>
<dbReference type="GO" id="GO:0005163">
    <property type="term" value="F:nerve growth factor receptor binding"/>
    <property type="evidence" value="ECO:0007669"/>
    <property type="project" value="TreeGrafter"/>
</dbReference>
<dbReference type="GO" id="GO:0007169">
    <property type="term" value="P:cell surface receptor protein tyrosine kinase signaling pathway"/>
    <property type="evidence" value="ECO:0007669"/>
    <property type="project" value="TreeGrafter"/>
</dbReference>
<dbReference type="GO" id="GO:0050804">
    <property type="term" value="P:modulation of chemical synaptic transmission"/>
    <property type="evidence" value="ECO:0007669"/>
    <property type="project" value="TreeGrafter"/>
</dbReference>
<dbReference type="GO" id="GO:0043524">
    <property type="term" value="P:negative regulation of neuron apoptotic process"/>
    <property type="evidence" value="ECO:0007669"/>
    <property type="project" value="TreeGrafter"/>
</dbReference>
<dbReference type="GO" id="GO:0021675">
    <property type="term" value="P:nerve development"/>
    <property type="evidence" value="ECO:0007669"/>
    <property type="project" value="TreeGrafter"/>
</dbReference>
<dbReference type="GO" id="GO:0038180">
    <property type="term" value="P:nerve growth factor signaling pathway"/>
    <property type="evidence" value="ECO:0007669"/>
    <property type="project" value="TreeGrafter"/>
</dbReference>
<dbReference type="GO" id="GO:0048812">
    <property type="term" value="P:neuron projection morphogenesis"/>
    <property type="evidence" value="ECO:0007669"/>
    <property type="project" value="TreeGrafter"/>
</dbReference>
<dbReference type="Gene3D" id="2.10.90.10">
    <property type="entry name" value="Cystine-knot cytokines"/>
    <property type="match status" value="1"/>
</dbReference>
<dbReference type="InterPro" id="IPR029034">
    <property type="entry name" value="Cystine-knot_cytokine"/>
</dbReference>
<dbReference type="InterPro" id="IPR020408">
    <property type="entry name" value="Nerve_growth_factor-like"/>
</dbReference>
<dbReference type="InterPro" id="IPR002072">
    <property type="entry name" value="Nerve_growth_factor-rel"/>
</dbReference>
<dbReference type="InterPro" id="IPR045815">
    <property type="entry name" value="NTF3_N"/>
</dbReference>
<dbReference type="PANTHER" id="PTHR11589">
    <property type="entry name" value="NERVE GROWTH FACTOR NGF -RELATED"/>
    <property type="match status" value="1"/>
</dbReference>
<dbReference type="PANTHER" id="PTHR11589:SF4">
    <property type="entry name" value="NEUROTROPHIN-3"/>
    <property type="match status" value="1"/>
</dbReference>
<dbReference type="Pfam" id="PF00243">
    <property type="entry name" value="NGF"/>
    <property type="match status" value="1"/>
</dbReference>
<dbReference type="Pfam" id="PF19338">
    <property type="entry name" value="NTF3_N"/>
    <property type="match status" value="1"/>
</dbReference>
<dbReference type="PIRSF" id="PIRSF001789">
    <property type="entry name" value="NGF"/>
    <property type="match status" value="1"/>
</dbReference>
<dbReference type="SMART" id="SM00140">
    <property type="entry name" value="NGF"/>
    <property type="match status" value="1"/>
</dbReference>
<dbReference type="SUPFAM" id="SSF57501">
    <property type="entry name" value="Cystine-knot cytokines"/>
    <property type="match status" value="1"/>
</dbReference>
<dbReference type="PROSITE" id="PS50270">
    <property type="entry name" value="NGF_2"/>
    <property type="match status" value="1"/>
</dbReference>
<organism>
    <name type="scientific">Calabaria reinhardtii</name>
    <name type="common">Calabar boa</name>
    <name type="synonym">Calabar ground python</name>
    <dbReference type="NCBI Taxonomy" id="39283"/>
    <lineage>
        <taxon>Eukaryota</taxon>
        <taxon>Metazoa</taxon>
        <taxon>Chordata</taxon>
        <taxon>Craniata</taxon>
        <taxon>Vertebrata</taxon>
        <taxon>Euteleostomi</taxon>
        <taxon>Lepidosauria</taxon>
        <taxon>Squamata</taxon>
        <taxon>Bifurcata</taxon>
        <taxon>Unidentata</taxon>
        <taxon>Episquamata</taxon>
        <taxon>Toxicofera</taxon>
        <taxon>Serpentes</taxon>
        <taxon>Henophidia</taxon>
        <taxon>Boidae</taxon>
        <taxon>Erycinae</taxon>
        <taxon>Calabaria</taxon>
    </lineage>
</organism>
<sequence length="165" mass="18490">IQSTSMDQGSLTEDSMNSFIRTLIQAGIWKNKVPKQTARTKDGMQTTVKRTKAEAEAVASEGTRLGFQPVVLVDAELLRQQRRFSSPRVLLSENTPLEPPPLYLMEEPAVLNRTSRRKRYAEGKSHRGEYSVCDSESRWVTDKSSAVDIRGHQVTVLGEIRMGPS</sequence>
<gene>
    <name type="primary">NTF3</name>
</gene>
<reference key="1">
    <citation type="journal article" date="2006" name="Mol. Phylogenet. Evol.">
        <title>Dispersal and vicariance: the complex evolutionary history of boid snakes.</title>
        <authorList>
            <person name="Noonan B.P."/>
            <person name="Chippindale P.T."/>
        </authorList>
    </citation>
    <scope>NUCLEOTIDE SEQUENCE [GENOMIC DNA]</scope>
</reference>